<accession>B4SHS5</accession>
<protein>
    <recommendedName>
        <fullName evidence="1">Elongation factor P-like protein</fullName>
    </recommendedName>
</protein>
<reference key="1">
    <citation type="submission" date="2008-06" db="EMBL/GenBank/DDBJ databases">
        <title>Complete sequence of Stenotrophomonas maltophilia R551-3.</title>
        <authorList>
            <consortium name="US DOE Joint Genome Institute"/>
            <person name="Lucas S."/>
            <person name="Copeland A."/>
            <person name="Lapidus A."/>
            <person name="Glavina del Rio T."/>
            <person name="Dalin E."/>
            <person name="Tice H."/>
            <person name="Pitluck S."/>
            <person name="Chain P."/>
            <person name="Malfatti S."/>
            <person name="Shin M."/>
            <person name="Vergez L."/>
            <person name="Lang D."/>
            <person name="Schmutz J."/>
            <person name="Larimer F."/>
            <person name="Land M."/>
            <person name="Hauser L."/>
            <person name="Kyrpides N."/>
            <person name="Mikhailova N."/>
            <person name="Taghavi S."/>
            <person name="Monchy S."/>
            <person name="Newman L."/>
            <person name="Vangronsveld J."/>
            <person name="van der Lelie D."/>
            <person name="Richardson P."/>
        </authorList>
    </citation>
    <scope>NUCLEOTIDE SEQUENCE [LARGE SCALE GENOMIC DNA]</scope>
    <source>
        <strain>R551-3</strain>
    </source>
</reference>
<proteinExistence type="inferred from homology"/>
<name>EFPL_STRM5</name>
<gene>
    <name type="ordered locus">Smal_1798</name>
</gene>
<sequence>MKANDIKKGNVVEFNNGVYQIRDIERSSPQGRGGNVRFRFIMYSVPGGNKLDASFDADDNLVEVELLRRQSTYSYKDGDAFVFLDDEDYTPYTLDADVIGDDAGYITDGLTGIYVQVIDEQPVAIQLPASVVLEVIETPPELKGGTATKRPKPAKLNTGIEIMVPEYIVNGERVLVNTATGEFAGRAD</sequence>
<evidence type="ECO:0000255" key="1">
    <source>
        <dbReference type="HAMAP-Rule" id="MF_00646"/>
    </source>
</evidence>
<feature type="chain" id="PRO_1000130927" description="Elongation factor P-like protein">
    <location>
        <begin position="1"/>
        <end position="188"/>
    </location>
</feature>
<dbReference type="EMBL" id="CP001111">
    <property type="protein sequence ID" value="ACF51502.1"/>
    <property type="molecule type" value="Genomic_DNA"/>
</dbReference>
<dbReference type="SMR" id="B4SHS5"/>
<dbReference type="STRING" id="391008.Smal_1798"/>
<dbReference type="KEGG" id="smt:Smal_1798"/>
<dbReference type="eggNOG" id="COG0231">
    <property type="taxonomic scope" value="Bacteria"/>
</dbReference>
<dbReference type="HOGENOM" id="CLU_074944_2_0_6"/>
<dbReference type="OrthoDB" id="9801844at2"/>
<dbReference type="Proteomes" id="UP000001867">
    <property type="component" value="Chromosome"/>
</dbReference>
<dbReference type="GO" id="GO:0005737">
    <property type="term" value="C:cytoplasm"/>
    <property type="evidence" value="ECO:0007669"/>
    <property type="project" value="InterPro"/>
</dbReference>
<dbReference type="GO" id="GO:0003746">
    <property type="term" value="F:translation elongation factor activity"/>
    <property type="evidence" value="ECO:0007669"/>
    <property type="project" value="UniProtKB-UniRule"/>
</dbReference>
<dbReference type="GO" id="GO:0043043">
    <property type="term" value="P:peptide biosynthetic process"/>
    <property type="evidence" value="ECO:0007669"/>
    <property type="project" value="InterPro"/>
</dbReference>
<dbReference type="CDD" id="cd04470">
    <property type="entry name" value="S1_EF-P_repeat_1"/>
    <property type="match status" value="1"/>
</dbReference>
<dbReference type="CDD" id="cd05794">
    <property type="entry name" value="S1_EF-P_repeat_2"/>
    <property type="match status" value="1"/>
</dbReference>
<dbReference type="FunFam" id="2.40.50.140:FF:000004">
    <property type="entry name" value="Elongation factor P"/>
    <property type="match status" value="1"/>
</dbReference>
<dbReference type="FunFam" id="2.30.30.30:FF:000036">
    <property type="entry name" value="Elongation factor P-like protein"/>
    <property type="match status" value="1"/>
</dbReference>
<dbReference type="FunFam" id="2.40.50.140:FF:000233">
    <property type="entry name" value="Elongation factor P-like protein"/>
    <property type="match status" value="1"/>
</dbReference>
<dbReference type="Gene3D" id="2.30.30.30">
    <property type="match status" value="1"/>
</dbReference>
<dbReference type="Gene3D" id="2.40.50.140">
    <property type="entry name" value="Nucleic acid-binding proteins"/>
    <property type="match status" value="2"/>
</dbReference>
<dbReference type="HAMAP" id="MF_00646">
    <property type="entry name" value="EFP"/>
    <property type="match status" value="1"/>
</dbReference>
<dbReference type="InterPro" id="IPR015365">
    <property type="entry name" value="Elong-fact-P_C"/>
</dbReference>
<dbReference type="InterPro" id="IPR012340">
    <property type="entry name" value="NA-bd_OB-fold"/>
</dbReference>
<dbReference type="InterPro" id="IPR014722">
    <property type="entry name" value="Rib_uL2_dom2"/>
</dbReference>
<dbReference type="InterPro" id="IPR020599">
    <property type="entry name" value="Transl_elong_fac_P/YeiP"/>
</dbReference>
<dbReference type="InterPro" id="IPR013185">
    <property type="entry name" value="Transl_elong_KOW-like"/>
</dbReference>
<dbReference type="InterPro" id="IPR011897">
    <property type="entry name" value="Transl_elong_p-like_YeiP"/>
</dbReference>
<dbReference type="InterPro" id="IPR001059">
    <property type="entry name" value="Transl_elong_P/YeiP_cen"/>
</dbReference>
<dbReference type="InterPro" id="IPR013852">
    <property type="entry name" value="Transl_elong_P/YeiP_CS"/>
</dbReference>
<dbReference type="InterPro" id="IPR008991">
    <property type="entry name" value="Translation_prot_SH3-like_sf"/>
</dbReference>
<dbReference type="NCBIfam" id="NF001810">
    <property type="entry name" value="PRK00529.1"/>
    <property type="match status" value="1"/>
</dbReference>
<dbReference type="NCBIfam" id="NF003392">
    <property type="entry name" value="PRK04542.1"/>
    <property type="match status" value="1"/>
</dbReference>
<dbReference type="NCBIfam" id="TIGR02178">
    <property type="entry name" value="yeiP"/>
    <property type="match status" value="1"/>
</dbReference>
<dbReference type="PANTHER" id="PTHR30053">
    <property type="entry name" value="ELONGATION FACTOR P"/>
    <property type="match status" value="1"/>
</dbReference>
<dbReference type="PANTHER" id="PTHR30053:SF14">
    <property type="entry name" value="TRANSLATION ELONGATION FACTOR KOW-LIKE DOMAIN-CONTAINING PROTEIN"/>
    <property type="match status" value="1"/>
</dbReference>
<dbReference type="Pfam" id="PF01132">
    <property type="entry name" value="EFP"/>
    <property type="match status" value="1"/>
</dbReference>
<dbReference type="Pfam" id="PF08207">
    <property type="entry name" value="EFP_N"/>
    <property type="match status" value="1"/>
</dbReference>
<dbReference type="Pfam" id="PF09285">
    <property type="entry name" value="Elong-fact-P_C"/>
    <property type="match status" value="1"/>
</dbReference>
<dbReference type="PIRSF" id="PIRSF005901">
    <property type="entry name" value="EF-P"/>
    <property type="match status" value="1"/>
</dbReference>
<dbReference type="SMART" id="SM01185">
    <property type="entry name" value="EFP"/>
    <property type="match status" value="1"/>
</dbReference>
<dbReference type="SMART" id="SM00841">
    <property type="entry name" value="Elong-fact-P_C"/>
    <property type="match status" value="1"/>
</dbReference>
<dbReference type="SUPFAM" id="SSF50249">
    <property type="entry name" value="Nucleic acid-binding proteins"/>
    <property type="match status" value="2"/>
</dbReference>
<dbReference type="SUPFAM" id="SSF50104">
    <property type="entry name" value="Translation proteins SH3-like domain"/>
    <property type="match status" value="1"/>
</dbReference>
<dbReference type="PROSITE" id="PS01275">
    <property type="entry name" value="EFP"/>
    <property type="match status" value="1"/>
</dbReference>
<comment type="similarity">
    <text evidence="1">Belongs to the elongation factor P family.</text>
</comment>
<organism>
    <name type="scientific">Stenotrophomonas maltophilia (strain R551-3)</name>
    <dbReference type="NCBI Taxonomy" id="391008"/>
    <lineage>
        <taxon>Bacteria</taxon>
        <taxon>Pseudomonadati</taxon>
        <taxon>Pseudomonadota</taxon>
        <taxon>Gammaproteobacteria</taxon>
        <taxon>Lysobacterales</taxon>
        <taxon>Lysobacteraceae</taxon>
        <taxon>Stenotrophomonas</taxon>
        <taxon>Stenotrophomonas maltophilia group</taxon>
    </lineage>
</organism>